<feature type="chain" id="PRO_0000409267" description="Chromosome partition protein Smc">
    <location>
        <begin position="1"/>
        <end position="1183"/>
    </location>
</feature>
<feature type="domain" description="SMC hinge">
    <location>
        <begin position="523"/>
        <end position="632"/>
    </location>
</feature>
<feature type="region of interest" description="Disordered" evidence="2">
    <location>
        <begin position="409"/>
        <end position="442"/>
    </location>
</feature>
<feature type="coiled-coil region" evidence="1">
    <location>
        <begin position="167"/>
        <end position="322"/>
    </location>
</feature>
<feature type="coiled-coil region" evidence="1">
    <location>
        <begin position="358"/>
        <end position="497"/>
    </location>
</feature>
<feature type="coiled-coil region" evidence="1">
    <location>
        <begin position="669"/>
        <end position="941"/>
    </location>
</feature>
<feature type="coiled-coil region" evidence="1">
    <location>
        <begin position="980"/>
        <end position="1025"/>
    </location>
</feature>
<feature type="compositionally biased region" description="Basic and acidic residues" evidence="2">
    <location>
        <begin position="419"/>
        <end position="442"/>
    </location>
</feature>
<feature type="binding site" evidence="1">
    <location>
        <begin position="32"/>
        <end position="39"/>
    </location>
    <ligand>
        <name>ATP</name>
        <dbReference type="ChEBI" id="CHEBI:30616"/>
    </ligand>
</feature>
<evidence type="ECO:0000255" key="1">
    <source>
        <dbReference type="HAMAP-Rule" id="MF_01894"/>
    </source>
</evidence>
<evidence type="ECO:0000256" key="2">
    <source>
        <dbReference type="SAM" id="MobiDB-lite"/>
    </source>
</evidence>
<reference key="1">
    <citation type="journal article" date="2002" name="Proc. Natl. Acad. Sci. U.S.A.">
        <title>The complete genome sequence of Chlorobium tepidum TLS, a photosynthetic, anaerobic, green-sulfur bacterium.</title>
        <authorList>
            <person name="Eisen J.A."/>
            <person name="Nelson K.E."/>
            <person name="Paulsen I.T."/>
            <person name="Heidelberg J.F."/>
            <person name="Wu M."/>
            <person name="Dodson R.J."/>
            <person name="DeBoy R.T."/>
            <person name="Gwinn M.L."/>
            <person name="Nelson W.C."/>
            <person name="Haft D.H."/>
            <person name="Hickey E.K."/>
            <person name="Peterson J.D."/>
            <person name="Durkin A.S."/>
            <person name="Kolonay J.F."/>
            <person name="Yang F."/>
            <person name="Holt I.E."/>
            <person name="Umayam L.A."/>
            <person name="Mason T.M."/>
            <person name="Brenner M."/>
            <person name="Shea T.P."/>
            <person name="Parksey D.S."/>
            <person name="Nierman W.C."/>
            <person name="Feldblyum T.V."/>
            <person name="Hansen C.L."/>
            <person name="Craven M.B."/>
            <person name="Radune D."/>
            <person name="Vamathevan J.J."/>
            <person name="Khouri H.M."/>
            <person name="White O."/>
            <person name="Gruber T.M."/>
            <person name="Ketchum K.A."/>
            <person name="Venter J.C."/>
            <person name="Tettelin H."/>
            <person name="Bryant D.A."/>
            <person name="Fraser C.M."/>
        </authorList>
    </citation>
    <scope>NUCLEOTIDE SEQUENCE [LARGE SCALE GENOMIC DNA]</scope>
    <source>
        <strain>ATCC 49652 / DSM 12025 / NBRC 103806 / TLS</strain>
    </source>
</reference>
<organism>
    <name type="scientific">Chlorobaculum tepidum (strain ATCC 49652 / DSM 12025 / NBRC 103806 / TLS)</name>
    <name type="common">Chlorobium tepidum</name>
    <dbReference type="NCBI Taxonomy" id="194439"/>
    <lineage>
        <taxon>Bacteria</taxon>
        <taxon>Pseudomonadati</taxon>
        <taxon>Chlorobiota</taxon>
        <taxon>Chlorobiia</taxon>
        <taxon>Chlorobiales</taxon>
        <taxon>Chlorobiaceae</taxon>
        <taxon>Chlorobaculum</taxon>
    </lineage>
</organism>
<keyword id="KW-0067">ATP-binding</keyword>
<keyword id="KW-0175">Coiled coil</keyword>
<keyword id="KW-0963">Cytoplasm</keyword>
<keyword id="KW-0238">DNA-binding</keyword>
<keyword id="KW-0547">Nucleotide-binding</keyword>
<keyword id="KW-1185">Reference proteome</keyword>
<proteinExistence type="inferred from homology"/>
<dbReference type="EMBL" id="AE006470">
    <property type="protein sequence ID" value="AAM72931.1"/>
    <property type="molecule type" value="Genomic_DNA"/>
</dbReference>
<dbReference type="RefSeq" id="NP_662589.1">
    <property type="nucleotide sequence ID" value="NC_002932.3"/>
</dbReference>
<dbReference type="RefSeq" id="WP_010933370.1">
    <property type="nucleotide sequence ID" value="NC_002932.3"/>
</dbReference>
<dbReference type="SMR" id="Q8KBS6"/>
<dbReference type="STRING" id="194439.CT1707"/>
<dbReference type="EnsemblBacteria" id="AAM72931">
    <property type="protein sequence ID" value="AAM72931"/>
    <property type="gene ID" value="CT1707"/>
</dbReference>
<dbReference type="KEGG" id="cte:CT1707"/>
<dbReference type="PATRIC" id="fig|194439.7.peg.1542"/>
<dbReference type="eggNOG" id="COG1196">
    <property type="taxonomic scope" value="Bacteria"/>
</dbReference>
<dbReference type="HOGENOM" id="CLU_001042_2_2_10"/>
<dbReference type="OrthoDB" id="9808768at2"/>
<dbReference type="Proteomes" id="UP000001007">
    <property type="component" value="Chromosome"/>
</dbReference>
<dbReference type="GO" id="GO:0005694">
    <property type="term" value="C:chromosome"/>
    <property type="evidence" value="ECO:0007669"/>
    <property type="project" value="InterPro"/>
</dbReference>
<dbReference type="GO" id="GO:0005737">
    <property type="term" value="C:cytoplasm"/>
    <property type="evidence" value="ECO:0007669"/>
    <property type="project" value="UniProtKB-SubCell"/>
</dbReference>
<dbReference type="GO" id="GO:0005524">
    <property type="term" value="F:ATP binding"/>
    <property type="evidence" value="ECO:0007669"/>
    <property type="project" value="UniProtKB-UniRule"/>
</dbReference>
<dbReference type="GO" id="GO:0016887">
    <property type="term" value="F:ATP hydrolysis activity"/>
    <property type="evidence" value="ECO:0007669"/>
    <property type="project" value="InterPro"/>
</dbReference>
<dbReference type="GO" id="GO:0003677">
    <property type="term" value="F:DNA binding"/>
    <property type="evidence" value="ECO:0007669"/>
    <property type="project" value="UniProtKB-UniRule"/>
</dbReference>
<dbReference type="GO" id="GO:0030261">
    <property type="term" value="P:chromosome condensation"/>
    <property type="evidence" value="ECO:0007669"/>
    <property type="project" value="InterPro"/>
</dbReference>
<dbReference type="GO" id="GO:0007059">
    <property type="term" value="P:chromosome segregation"/>
    <property type="evidence" value="ECO:0007669"/>
    <property type="project" value="UniProtKB-UniRule"/>
</dbReference>
<dbReference type="GO" id="GO:0006260">
    <property type="term" value="P:DNA replication"/>
    <property type="evidence" value="ECO:0007669"/>
    <property type="project" value="UniProtKB-UniRule"/>
</dbReference>
<dbReference type="GO" id="GO:0007062">
    <property type="term" value="P:sister chromatid cohesion"/>
    <property type="evidence" value="ECO:0007669"/>
    <property type="project" value="InterPro"/>
</dbReference>
<dbReference type="CDD" id="cd03278">
    <property type="entry name" value="ABC_SMC_barmotin"/>
    <property type="match status" value="1"/>
</dbReference>
<dbReference type="Gene3D" id="1.10.287.1490">
    <property type="match status" value="1"/>
</dbReference>
<dbReference type="Gene3D" id="1.20.1060.20">
    <property type="match status" value="1"/>
</dbReference>
<dbReference type="Gene3D" id="3.30.70.1620">
    <property type="match status" value="1"/>
</dbReference>
<dbReference type="Gene3D" id="3.40.50.300">
    <property type="entry name" value="P-loop containing nucleotide triphosphate hydrolases"/>
    <property type="match status" value="2"/>
</dbReference>
<dbReference type="HAMAP" id="MF_01894">
    <property type="entry name" value="Smc_prok"/>
    <property type="match status" value="1"/>
</dbReference>
<dbReference type="InterPro" id="IPR027417">
    <property type="entry name" value="P-loop_NTPase"/>
</dbReference>
<dbReference type="InterPro" id="IPR003395">
    <property type="entry name" value="RecF/RecN/SMC_N"/>
</dbReference>
<dbReference type="InterPro" id="IPR024704">
    <property type="entry name" value="SMC"/>
</dbReference>
<dbReference type="InterPro" id="IPR010935">
    <property type="entry name" value="SMC_hinge"/>
</dbReference>
<dbReference type="InterPro" id="IPR036277">
    <property type="entry name" value="SMC_hinge_sf"/>
</dbReference>
<dbReference type="InterPro" id="IPR011890">
    <property type="entry name" value="SMC_prok"/>
</dbReference>
<dbReference type="NCBIfam" id="TIGR02168">
    <property type="entry name" value="SMC_prok_B"/>
    <property type="match status" value="1"/>
</dbReference>
<dbReference type="PANTHER" id="PTHR43977">
    <property type="entry name" value="STRUCTURAL MAINTENANCE OF CHROMOSOMES PROTEIN 3"/>
    <property type="match status" value="1"/>
</dbReference>
<dbReference type="Pfam" id="PF06470">
    <property type="entry name" value="SMC_hinge"/>
    <property type="match status" value="1"/>
</dbReference>
<dbReference type="Pfam" id="PF02463">
    <property type="entry name" value="SMC_N"/>
    <property type="match status" value="1"/>
</dbReference>
<dbReference type="PIRSF" id="PIRSF005719">
    <property type="entry name" value="SMC"/>
    <property type="match status" value="1"/>
</dbReference>
<dbReference type="SMART" id="SM00968">
    <property type="entry name" value="SMC_hinge"/>
    <property type="match status" value="1"/>
</dbReference>
<dbReference type="SUPFAM" id="SSF90257">
    <property type="entry name" value="Myosin rod fragments"/>
    <property type="match status" value="1"/>
</dbReference>
<dbReference type="SUPFAM" id="SSF52540">
    <property type="entry name" value="P-loop containing nucleoside triphosphate hydrolases"/>
    <property type="match status" value="1"/>
</dbReference>
<dbReference type="SUPFAM" id="SSF75553">
    <property type="entry name" value="Smc hinge domain"/>
    <property type="match status" value="1"/>
</dbReference>
<comment type="function">
    <text evidence="1">Required for chromosome condensation and partitioning.</text>
</comment>
<comment type="subunit">
    <text evidence="1">Homodimer.</text>
</comment>
<comment type="subcellular location">
    <subcellularLocation>
        <location evidence="1">Cytoplasm</location>
    </subcellularLocation>
</comment>
<comment type="domain">
    <text evidence="1">Contains large globular domains required for ATP hydrolysis at each terminus and a third globular domain forming a flexible SMC hinge near the middle of the molecule. These domains are separated by coiled-coil structures.</text>
</comment>
<comment type="similarity">
    <text evidence="1">Belongs to the SMC family.</text>
</comment>
<sequence>MYLSKIELFGFKSFAHRVRIHFDKGLTAIVGPNGCGKTNVVDAIRWVLGEQKSMLLRSPKMENIIFNGTKRLKPLSFTEVSITIENTRNILPTEYTEVTVTRRLYRNGDSDYLLNMVPCRLKDILDLFADTGMGSDAYSVIELKMIEEIISNKSEERLKLFEEAAGITRYKQRRKQTFRQLESASRDLARVDDVLAEVEKKVRNLRLQVRKAERLKEIREELRTLDLTLSAISMDEHLQKLRPLLDSIAAEERQCHELAATIAKLDSAHQESELRQLELERKLADAQKELNASNQLVHTLEKQLLQHKEKQKNLLQTIERLNYSIADKGRKRLEQEALSKELSEKQTPLQEVCTAQLAEFERLKKQEVELNSALDASRQALQSERRAVAELQKSLNALNLTRQSLRTRKEHLEGSVNRLDQRKRDLERSMEQAEPERRRTSEAIEEKKIALDELKKEEERLVALKASITEQSEKKKEELLSLKSEHNHLNNRIALCNSILEKFEGLPEGVAFLEKQRAGKPGLGCLSDLISVRENDKKAINAALGESLGYYLCRNLEEARLAVSSLAKADKGKVHFLILDLIDGGAKIDYAEIEGARRAIDLVETPAELSKALNLLLQHCYVVADLDAAEQLGKKHPEALFITEKGEKFTRRGMLYGGSAKGGESVRLGKKAERDRLQKQMAGMAETIAEAENALAVLRKEFSAIDTERVKRAAASISQEISALEKRLARLEAEERSGADQIAHADRERTALIASMQSVLDELEKTQPETLRIEAEIETAQQKVNVMQEELSAGESRSRALHAELQAQQGRYRDAQLDLEKHRFRASACQQTIVTLSDEIEGMQHQIARAEKEVAELGQSIAQATAEHEQAVVVSARQQEALNELESSYRDLQTKNHDTLSNLRDLRRKHDLSQQMLAEFNNRKAKLEQEIAHLQATVMERYGVELEMMPAHVPEGFDVAASRERLAYLQKQKEQFGGVNELALEEYESEKERLDFLTAQKEDLVSAEKQLRETIEEINRTALEKFRETFNQVRKNFIRIFHDLFDPEDEVDLLITTSDEDPLEAHIQIVAKPRGKKPLAIEQLSGGEKALTALSLLFAIYLVKPSPFCILDEVDAPLDDANVGRFIKLLKKFENNTQFIIVTHNKKSMASCQALYGVTMEEEGVSKLIPVKIENARSEETAS</sequence>
<accession>Q8KBS6</accession>
<gene>
    <name evidence="1" type="primary">smc</name>
    <name type="ordered locus">CT1707</name>
</gene>
<name>SMC_CHLTE</name>
<protein>
    <recommendedName>
        <fullName evidence="1">Chromosome partition protein Smc</fullName>
    </recommendedName>
</protein>